<reference key="1">
    <citation type="submission" date="2008-12" db="EMBL/GenBank/DDBJ databases">
        <title>Complete sequence of chromosome of Methylobacterium chloromethanicum CM4.</title>
        <authorList>
            <consortium name="US DOE Joint Genome Institute"/>
            <person name="Lucas S."/>
            <person name="Copeland A."/>
            <person name="Lapidus A."/>
            <person name="Glavina del Rio T."/>
            <person name="Dalin E."/>
            <person name="Tice H."/>
            <person name="Bruce D."/>
            <person name="Goodwin L."/>
            <person name="Pitluck S."/>
            <person name="Chertkov O."/>
            <person name="Brettin T."/>
            <person name="Detter J.C."/>
            <person name="Han C."/>
            <person name="Larimer F."/>
            <person name="Land M."/>
            <person name="Hauser L."/>
            <person name="Kyrpides N."/>
            <person name="Mikhailova N."/>
            <person name="Marx C."/>
            <person name="Richardson P."/>
        </authorList>
    </citation>
    <scope>NUCLEOTIDE SEQUENCE [LARGE SCALE GENOMIC DNA]</scope>
    <source>
        <strain>CM4 / NCIMB 13688</strain>
    </source>
</reference>
<organism>
    <name type="scientific">Methylorubrum extorquens (strain CM4 / NCIMB 13688)</name>
    <name type="common">Methylobacterium extorquens</name>
    <dbReference type="NCBI Taxonomy" id="440085"/>
    <lineage>
        <taxon>Bacteria</taxon>
        <taxon>Pseudomonadati</taxon>
        <taxon>Pseudomonadota</taxon>
        <taxon>Alphaproteobacteria</taxon>
        <taxon>Hyphomicrobiales</taxon>
        <taxon>Methylobacteriaceae</taxon>
        <taxon>Methylorubrum</taxon>
    </lineage>
</organism>
<evidence type="ECO:0000255" key="1">
    <source>
        <dbReference type="HAMAP-Rule" id="MF_00006"/>
    </source>
</evidence>
<protein>
    <recommendedName>
        <fullName evidence="1">Argininosuccinate lyase</fullName>
        <shortName evidence="1">ASAL</shortName>
        <ecNumber evidence="1">4.3.2.1</ecNumber>
    </recommendedName>
    <alternativeName>
        <fullName evidence="1">Arginosuccinase</fullName>
    </alternativeName>
</protein>
<sequence length="463" mass="49706">MSNRMWGGRFASGPAEIMEEINASIGFDRRLASQDIRGSLAHVAMLGSQGILPAEDVAAIEAGLKSVEAEIARGEFVFRRELEDIHMAVESRLTEIVGPAAGRLHTARSRNDQVATDMRLWVRDTLDALDAQVADLQRALAETAVKHAGTVMPGFTHLQSAQPVTFGHHCLAYVEMLARDRGRFRDARARLNECPLGAAALAGTSFPIDRHATAAALGFDRPTANSLDSVADRDFALESLSAASICAVHLSRFAEELVVWTSAQFGFVRLSDGFTTGSSIMPQKRNPDAAELVRAKAGRIIGALTGLLIVMKGLPLAYSKDMQEDKEGTFDALQSLSLCLAAMAGMVRDLEPVAETLKRAAGSGYATATDLADWLVRELNMPFRQAHHVTGRVVAAASERGIGLEELSLQDMQAVEAGITDAVFAVLGVENSVASRTSYGGTAPDNVRRQAEGWLEKLGPVEK</sequence>
<accession>B7KW75</accession>
<proteinExistence type="inferred from homology"/>
<comment type="catalytic activity">
    <reaction evidence="1">
        <text>2-(N(omega)-L-arginino)succinate = fumarate + L-arginine</text>
        <dbReference type="Rhea" id="RHEA:24020"/>
        <dbReference type="ChEBI" id="CHEBI:29806"/>
        <dbReference type="ChEBI" id="CHEBI:32682"/>
        <dbReference type="ChEBI" id="CHEBI:57472"/>
        <dbReference type="EC" id="4.3.2.1"/>
    </reaction>
</comment>
<comment type="pathway">
    <text evidence="1">Amino-acid biosynthesis; L-arginine biosynthesis; L-arginine from L-ornithine and carbamoyl phosphate: step 3/3.</text>
</comment>
<comment type="subcellular location">
    <subcellularLocation>
        <location evidence="1">Cytoplasm</location>
    </subcellularLocation>
</comment>
<comment type="similarity">
    <text evidence="1">Belongs to the lyase 1 family. Argininosuccinate lyase subfamily.</text>
</comment>
<dbReference type="EC" id="4.3.2.1" evidence="1"/>
<dbReference type="EMBL" id="CP001298">
    <property type="protein sequence ID" value="ACK84432.1"/>
    <property type="molecule type" value="Genomic_DNA"/>
</dbReference>
<dbReference type="RefSeq" id="WP_015951679.1">
    <property type="nucleotide sequence ID" value="NC_011757.1"/>
</dbReference>
<dbReference type="SMR" id="B7KW75"/>
<dbReference type="KEGG" id="mch:Mchl_3612"/>
<dbReference type="HOGENOM" id="CLU_027272_2_3_5"/>
<dbReference type="UniPathway" id="UPA00068">
    <property type="reaction ID" value="UER00114"/>
</dbReference>
<dbReference type="Proteomes" id="UP000002385">
    <property type="component" value="Chromosome"/>
</dbReference>
<dbReference type="GO" id="GO:0005829">
    <property type="term" value="C:cytosol"/>
    <property type="evidence" value="ECO:0007669"/>
    <property type="project" value="TreeGrafter"/>
</dbReference>
<dbReference type="GO" id="GO:0004056">
    <property type="term" value="F:argininosuccinate lyase activity"/>
    <property type="evidence" value="ECO:0007669"/>
    <property type="project" value="UniProtKB-UniRule"/>
</dbReference>
<dbReference type="GO" id="GO:0042450">
    <property type="term" value="P:arginine biosynthetic process via ornithine"/>
    <property type="evidence" value="ECO:0007669"/>
    <property type="project" value="InterPro"/>
</dbReference>
<dbReference type="GO" id="GO:0006526">
    <property type="term" value="P:L-arginine biosynthetic process"/>
    <property type="evidence" value="ECO:0007669"/>
    <property type="project" value="UniProtKB-UniRule"/>
</dbReference>
<dbReference type="CDD" id="cd01359">
    <property type="entry name" value="Argininosuccinate_lyase"/>
    <property type="match status" value="1"/>
</dbReference>
<dbReference type="FunFam" id="1.10.275.10:FF:000002">
    <property type="entry name" value="Argininosuccinate lyase"/>
    <property type="match status" value="1"/>
</dbReference>
<dbReference type="FunFam" id="1.10.40.30:FF:000001">
    <property type="entry name" value="Argininosuccinate lyase"/>
    <property type="match status" value="1"/>
</dbReference>
<dbReference type="FunFam" id="1.20.200.10:FF:000006">
    <property type="entry name" value="Argininosuccinate lyase"/>
    <property type="match status" value="1"/>
</dbReference>
<dbReference type="Gene3D" id="1.10.40.30">
    <property type="entry name" value="Fumarase/aspartase (C-terminal domain)"/>
    <property type="match status" value="1"/>
</dbReference>
<dbReference type="Gene3D" id="1.20.200.10">
    <property type="entry name" value="Fumarase/aspartase (Central domain)"/>
    <property type="match status" value="1"/>
</dbReference>
<dbReference type="Gene3D" id="1.10.275.10">
    <property type="entry name" value="Fumarase/aspartase (N-terminal domain)"/>
    <property type="match status" value="1"/>
</dbReference>
<dbReference type="HAMAP" id="MF_00006">
    <property type="entry name" value="Arg_succ_lyase"/>
    <property type="match status" value="1"/>
</dbReference>
<dbReference type="InterPro" id="IPR029419">
    <property type="entry name" value="Arg_succ_lyase_C"/>
</dbReference>
<dbReference type="InterPro" id="IPR009049">
    <property type="entry name" value="Argininosuccinate_lyase"/>
</dbReference>
<dbReference type="InterPro" id="IPR024083">
    <property type="entry name" value="Fumarase/histidase_N"/>
</dbReference>
<dbReference type="InterPro" id="IPR020557">
    <property type="entry name" value="Fumarate_lyase_CS"/>
</dbReference>
<dbReference type="InterPro" id="IPR000362">
    <property type="entry name" value="Fumarate_lyase_fam"/>
</dbReference>
<dbReference type="InterPro" id="IPR022761">
    <property type="entry name" value="Fumarate_lyase_N"/>
</dbReference>
<dbReference type="InterPro" id="IPR008948">
    <property type="entry name" value="L-Aspartase-like"/>
</dbReference>
<dbReference type="NCBIfam" id="TIGR00838">
    <property type="entry name" value="argH"/>
    <property type="match status" value="1"/>
</dbReference>
<dbReference type="PANTHER" id="PTHR43814">
    <property type="entry name" value="ARGININOSUCCINATE LYASE"/>
    <property type="match status" value="1"/>
</dbReference>
<dbReference type="PANTHER" id="PTHR43814:SF1">
    <property type="entry name" value="ARGININOSUCCINATE LYASE"/>
    <property type="match status" value="1"/>
</dbReference>
<dbReference type="Pfam" id="PF14698">
    <property type="entry name" value="ASL_C2"/>
    <property type="match status" value="1"/>
</dbReference>
<dbReference type="Pfam" id="PF00206">
    <property type="entry name" value="Lyase_1"/>
    <property type="match status" value="1"/>
</dbReference>
<dbReference type="PRINTS" id="PR00145">
    <property type="entry name" value="ARGSUCLYASE"/>
</dbReference>
<dbReference type="PRINTS" id="PR00149">
    <property type="entry name" value="FUMRATELYASE"/>
</dbReference>
<dbReference type="SUPFAM" id="SSF48557">
    <property type="entry name" value="L-aspartase-like"/>
    <property type="match status" value="1"/>
</dbReference>
<dbReference type="PROSITE" id="PS00163">
    <property type="entry name" value="FUMARATE_LYASES"/>
    <property type="match status" value="1"/>
</dbReference>
<gene>
    <name evidence="1" type="primary">argH</name>
    <name type="ordered locus">Mchl_3612</name>
</gene>
<keyword id="KW-0028">Amino-acid biosynthesis</keyword>
<keyword id="KW-0055">Arginine biosynthesis</keyword>
<keyword id="KW-0963">Cytoplasm</keyword>
<keyword id="KW-0456">Lyase</keyword>
<feature type="chain" id="PRO_1000116331" description="Argininosuccinate lyase">
    <location>
        <begin position="1"/>
        <end position="463"/>
    </location>
</feature>
<name>ARLY_METC4</name>